<keyword id="KW-0963">Cytoplasm</keyword>
<keyword id="KW-0275">Fatty acid biosynthesis</keyword>
<keyword id="KW-0276">Fatty acid metabolism</keyword>
<keyword id="KW-0444">Lipid biosynthesis</keyword>
<keyword id="KW-0443">Lipid metabolism</keyword>
<keyword id="KW-0460">Magnesium</keyword>
<keyword id="KW-0479">Metal-binding</keyword>
<keyword id="KW-0808">Transferase</keyword>
<feature type="chain" id="PRO_0000175729" description="Holo-[acyl-carrier-protein] synthase">
    <location>
        <begin position="1"/>
        <end position="126"/>
    </location>
</feature>
<feature type="binding site" evidence="1">
    <location>
        <position position="9"/>
    </location>
    <ligand>
        <name>Mg(2+)</name>
        <dbReference type="ChEBI" id="CHEBI:18420"/>
    </ligand>
</feature>
<feature type="binding site" evidence="1">
    <location>
        <position position="58"/>
    </location>
    <ligand>
        <name>Mg(2+)</name>
        <dbReference type="ChEBI" id="CHEBI:18420"/>
    </ligand>
</feature>
<accession>Q7MHP2</accession>
<gene>
    <name evidence="1" type="primary">acpS</name>
    <name type="ordered locus">VV2827</name>
</gene>
<comment type="function">
    <text evidence="1">Transfers the 4'-phosphopantetheine moiety from coenzyme A to a Ser of acyl-carrier-protein.</text>
</comment>
<comment type="catalytic activity">
    <reaction evidence="1">
        <text>apo-[ACP] + CoA = holo-[ACP] + adenosine 3',5'-bisphosphate + H(+)</text>
        <dbReference type="Rhea" id="RHEA:12068"/>
        <dbReference type="Rhea" id="RHEA-COMP:9685"/>
        <dbReference type="Rhea" id="RHEA-COMP:9690"/>
        <dbReference type="ChEBI" id="CHEBI:15378"/>
        <dbReference type="ChEBI" id="CHEBI:29999"/>
        <dbReference type="ChEBI" id="CHEBI:57287"/>
        <dbReference type="ChEBI" id="CHEBI:58343"/>
        <dbReference type="ChEBI" id="CHEBI:64479"/>
        <dbReference type="EC" id="2.7.8.7"/>
    </reaction>
</comment>
<comment type="cofactor">
    <cofactor evidence="1">
        <name>Mg(2+)</name>
        <dbReference type="ChEBI" id="CHEBI:18420"/>
    </cofactor>
</comment>
<comment type="subcellular location">
    <subcellularLocation>
        <location evidence="1">Cytoplasm</location>
    </subcellularLocation>
</comment>
<comment type="similarity">
    <text evidence="1">Belongs to the P-Pant transferase superfamily. AcpS family.</text>
</comment>
<protein>
    <recommendedName>
        <fullName evidence="1">Holo-[acyl-carrier-protein] synthase</fullName>
        <shortName evidence="1">Holo-ACP synthase</shortName>
        <ecNumber evidence="1">2.7.8.7</ecNumber>
    </recommendedName>
    <alternativeName>
        <fullName evidence="1">4'-phosphopantetheinyl transferase AcpS</fullName>
    </alternativeName>
</protein>
<proteinExistence type="inferred from homology"/>
<name>ACPS_VIBVY</name>
<organism>
    <name type="scientific">Vibrio vulnificus (strain YJ016)</name>
    <dbReference type="NCBI Taxonomy" id="196600"/>
    <lineage>
        <taxon>Bacteria</taxon>
        <taxon>Pseudomonadati</taxon>
        <taxon>Pseudomonadota</taxon>
        <taxon>Gammaproteobacteria</taxon>
        <taxon>Vibrionales</taxon>
        <taxon>Vibrionaceae</taxon>
        <taxon>Vibrio</taxon>
    </lineage>
</organism>
<reference key="1">
    <citation type="journal article" date="2003" name="Genome Res.">
        <title>Comparative genome analysis of Vibrio vulnificus, a marine pathogen.</title>
        <authorList>
            <person name="Chen C.-Y."/>
            <person name="Wu K.-M."/>
            <person name="Chang Y.-C."/>
            <person name="Chang C.-H."/>
            <person name="Tsai H.-C."/>
            <person name="Liao T.-L."/>
            <person name="Liu Y.-M."/>
            <person name="Chen H.-J."/>
            <person name="Shen A.B.-T."/>
            <person name="Li J.-C."/>
            <person name="Su T.-L."/>
            <person name="Shao C.-P."/>
            <person name="Lee C.-T."/>
            <person name="Hor L.-I."/>
            <person name="Tsai S.-F."/>
        </authorList>
    </citation>
    <scope>NUCLEOTIDE SEQUENCE [LARGE SCALE GENOMIC DNA]</scope>
    <source>
        <strain>YJ016</strain>
    </source>
</reference>
<sequence>MAIVGLGTDIAEIERVEKALARSGVAFAERILSVQEMETFVSLKQQGRFLAKRFAAKEAASKALGTGIAHGVSFQDFTIKNDDNGKPYLQLAGRAAELAHQMGVCHTHLSLSDERHYAVATVIFES</sequence>
<dbReference type="EC" id="2.7.8.7" evidence="1"/>
<dbReference type="EMBL" id="BA000037">
    <property type="protein sequence ID" value="BAC95591.1"/>
    <property type="molecule type" value="Genomic_DNA"/>
</dbReference>
<dbReference type="RefSeq" id="WP_011151162.1">
    <property type="nucleotide sequence ID" value="NC_005139.1"/>
</dbReference>
<dbReference type="SMR" id="Q7MHP2"/>
<dbReference type="STRING" id="672.VV93_v1c25360"/>
<dbReference type="GeneID" id="93895826"/>
<dbReference type="KEGG" id="vvy:VV2827"/>
<dbReference type="eggNOG" id="COG0736">
    <property type="taxonomic scope" value="Bacteria"/>
</dbReference>
<dbReference type="HOGENOM" id="CLU_089696_3_1_6"/>
<dbReference type="Proteomes" id="UP000002675">
    <property type="component" value="Chromosome I"/>
</dbReference>
<dbReference type="GO" id="GO:0005829">
    <property type="term" value="C:cytosol"/>
    <property type="evidence" value="ECO:0007669"/>
    <property type="project" value="TreeGrafter"/>
</dbReference>
<dbReference type="GO" id="GO:0008897">
    <property type="term" value="F:holo-[acyl-carrier-protein] synthase activity"/>
    <property type="evidence" value="ECO:0007669"/>
    <property type="project" value="UniProtKB-UniRule"/>
</dbReference>
<dbReference type="GO" id="GO:0000287">
    <property type="term" value="F:magnesium ion binding"/>
    <property type="evidence" value="ECO:0007669"/>
    <property type="project" value="UniProtKB-UniRule"/>
</dbReference>
<dbReference type="GO" id="GO:0006633">
    <property type="term" value="P:fatty acid biosynthetic process"/>
    <property type="evidence" value="ECO:0007669"/>
    <property type="project" value="UniProtKB-UniRule"/>
</dbReference>
<dbReference type="GO" id="GO:0019878">
    <property type="term" value="P:lysine biosynthetic process via aminoadipic acid"/>
    <property type="evidence" value="ECO:0007669"/>
    <property type="project" value="TreeGrafter"/>
</dbReference>
<dbReference type="FunFam" id="3.90.470.20:FF:000001">
    <property type="entry name" value="Holo-[acyl-carrier-protein] synthase"/>
    <property type="match status" value="1"/>
</dbReference>
<dbReference type="Gene3D" id="3.90.470.20">
    <property type="entry name" value="4'-phosphopantetheinyl transferase domain"/>
    <property type="match status" value="1"/>
</dbReference>
<dbReference type="HAMAP" id="MF_00101">
    <property type="entry name" value="AcpS"/>
    <property type="match status" value="1"/>
</dbReference>
<dbReference type="InterPro" id="IPR008278">
    <property type="entry name" value="4-PPantetheinyl_Trfase_dom"/>
</dbReference>
<dbReference type="InterPro" id="IPR037143">
    <property type="entry name" value="4-PPantetheinyl_Trfase_dom_sf"/>
</dbReference>
<dbReference type="InterPro" id="IPR002582">
    <property type="entry name" value="ACPS"/>
</dbReference>
<dbReference type="InterPro" id="IPR050559">
    <property type="entry name" value="P-Pant_transferase_sf"/>
</dbReference>
<dbReference type="InterPro" id="IPR004568">
    <property type="entry name" value="Ppantetheine-prot_Trfase_dom"/>
</dbReference>
<dbReference type="NCBIfam" id="TIGR00516">
    <property type="entry name" value="acpS"/>
    <property type="match status" value="1"/>
</dbReference>
<dbReference type="NCBIfam" id="TIGR00556">
    <property type="entry name" value="pantethn_trn"/>
    <property type="match status" value="1"/>
</dbReference>
<dbReference type="PANTHER" id="PTHR12215:SF10">
    <property type="entry name" value="L-AMINOADIPATE-SEMIALDEHYDE DEHYDROGENASE-PHOSPHOPANTETHEINYL TRANSFERASE"/>
    <property type="match status" value="1"/>
</dbReference>
<dbReference type="PANTHER" id="PTHR12215">
    <property type="entry name" value="PHOSPHOPANTETHEINE TRANSFERASE"/>
    <property type="match status" value="1"/>
</dbReference>
<dbReference type="Pfam" id="PF01648">
    <property type="entry name" value="ACPS"/>
    <property type="match status" value="1"/>
</dbReference>
<dbReference type="SUPFAM" id="SSF56214">
    <property type="entry name" value="4'-phosphopantetheinyl transferase"/>
    <property type="match status" value="1"/>
</dbReference>
<evidence type="ECO:0000255" key="1">
    <source>
        <dbReference type="HAMAP-Rule" id="MF_00101"/>
    </source>
</evidence>